<evidence type="ECO:0000250" key="1"/>
<evidence type="ECO:0000255" key="2">
    <source>
        <dbReference type="PROSITE-ProRule" id="PRU00108"/>
    </source>
</evidence>
<evidence type="ECO:0000269" key="3">
    <source>
    </source>
</evidence>
<evidence type="ECO:0000305" key="4"/>
<accession>Q4PSR7</accession>
<accession>Q9ZQB1</accession>
<name>ATB22_ARATH</name>
<reference key="1">
    <citation type="journal article" date="1999" name="Nature">
        <title>Sequence and analysis of chromosome 2 of the plant Arabidopsis thaliana.</title>
        <authorList>
            <person name="Lin X."/>
            <person name="Kaul S."/>
            <person name="Rounsley S.D."/>
            <person name="Shea T.P."/>
            <person name="Benito M.-I."/>
            <person name="Town C.D."/>
            <person name="Fujii C.Y."/>
            <person name="Mason T.M."/>
            <person name="Bowman C.L."/>
            <person name="Barnstead M.E."/>
            <person name="Feldblyum T.V."/>
            <person name="Buell C.R."/>
            <person name="Ketchum K.A."/>
            <person name="Lee J.J."/>
            <person name="Ronning C.M."/>
            <person name="Koo H.L."/>
            <person name="Moffat K.S."/>
            <person name="Cronin L.A."/>
            <person name="Shen M."/>
            <person name="Pai G."/>
            <person name="Van Aken S."/>
            <person name="Umayam L."/>
            <person name="Tallon L.J."/>
            <person name="Gill J.E."/>
            <person name="Adams M.D."/>
            <person name="Carrera A.J."/>
            <person name="Creasy T.H."/>
            <person name="Goodman H.M."/>
            <person name="Somerville C.R."/>
            <person name="Copenhaver G.P."/>
            <person name="Preuss D."/>
            <person name="Nierman W.C."/>
            <person name="White O."/>
            <person name="Eisen J.A."/>
            <person name="Salzberg S.L."/>
            <person name="Fraser C.M."/>
            <person name="Venter J.C."/>
        </authorList>
    </citation>
    <scope>NUCLEOTIDE SEQUENCE [LARGE SCALE GENOMIC DNA]</scope>
    <source>
        <strain>cv. Columbia</strain>
    </source>
</reference>
<reference key="2">
    <citation type="journal article" date="2017" name="Plant J.">
        <title>Araport11: a complete reannotation of the Arabidopsis thaliana reference genome.</title>
        <authorList>
            <person name="Cheng C.Y."/>
            <person name="Krishnakumar V."/>
            <person name="Chan A.P."/>
            <person name="Thibaud-Nissen F."/>
            <person name="Schobel S."/>
            <person name="Town C.D."/>
        </authorList>
    </citation>
    <scope>GENOME REANNOTATION</scope>
    <source>
        <strain>cv. Columbia</strain>
    </source>
</reference>
<reference key="3">
    <citation type="submission" date="2005-05" db="EMBL/GenBank/DDBJ databases">
        <authorList>
            <person name="Underwood B.A."/>
            <person name="Xiao Y.-L."/>
            <person name="Moskal W.A. Jr."/>
            <person name="Monaghan E.L."/>
            <person name="Wang W."/>
            <person name="Redman J.C."/>
            <person name="Wu H.C."/>
            <person name="Utterback T."/>
            <person name="Town C.D."/>
        </authorList>
    </citation>
    <scope>NUCLEOTIDE SEQUENCE [LARGE SCALE MRNA]</scope>
    <source>
        <strain>cv. Columbia</strain>
    </source>
</reference>
<reference key="4">
    <citation type="journal article" date="2005" name="Plant Physiol.">
        <title>Homeodomain leucine zipper class I genes in Arabidopsis. Expression patterns and phylogenetic relationships.</title>
        <authorList>
            <person name="Henriksson E."/>
            <person name="Olsson A.S.B."/>
            <person name="Johannesson H."/>
            <person name="Johansson H."/>
            <person name="Hanson J."/>
            <person name="Engstroem P."/>
            <person name="Soederman E."/>
        </authorList>
    </citation>
    <scope>GENE FAMILY</scope>
    <scope>TISSUE SPECIFICITY</scope>
</reference>
<comment type="function">
    <text evidence="1">Probable transcription factor.</text>
</comment>
<comment type="subcellular location">
    <subcellularLocation>
        <location evidence="4">Nucleus</location>
    </subcellularLocation>
</comment>
<comment type="tissue specificity">
    <text evidence="3">Expressed in siliques.</text>
</comment>
<comment type="similarity">
    <text evidence="4">Belongs to the HD-ZIP homeobox family. Class I subfamily.</text>
</comment>
<comment type="sequence caution" evidence="4">
    <conflict type="erroneous gene model prediction">
        <sequence resource="EMBL-CDS" id="AAD20137"/>
    </conflict>
</comment>
<comment type="sequence caution" evidence="4">
    <conflict type="erroneous gene model prediction">
        <sequence resource="EMBL-CDS" id="AAM15313"/>
    </conflict>
</comment>
<proteinExistence type="evidence at transcript level"/>
<feature type="chain" id="PRO_0000257799" description="Homeobox-leucine zipper protein ATHB-22">
    <location>
        <begin position="1"/>
        <end position="185"/>
    </location>
</feature>
<feature type="DNA-binding region" description="Homeobox" evidence="2">
    <location>
        <begin position="76"/>
        <end position="135"/>
    </location>
</feature>
<feature type="region of interest" description="Leucine-zipper">
    <location>
        <begin position="136"/>
        <end position="164"/>
    </location>
</feature>
<protein>
    <recommendedName>
        <fullName>Homeobox-leucine zipper protein ATHB-22</fullName>
    </recommendedName>
    <alternativeName>
        <fullName>HD-ZIP protein ATHB-22</fullName>
    </alternativeName>
    <alternativeName>
        <fullName>Homeodomain transcription factor ATHB-22</fullName>
    </alternativeName>
</protein>
<dbReference type="EMBL" id="AC006282">
    <property type="protein sequence ID" value="AAD20137.2"/>
    <property type="status" value="ALT_SEQ"/>
    <property type="molecule type" value="Genomic_DNA"/>
</dbReference>
<dbReference type="EMBL" id="AC006919">
    <property type="protein sequence ID" value="AAM15313.1"/>
    <property type="status" value="ALT_SEQ"/>
    <property type="molecule type" value="Genomic_DNA"/>
</dbReference>
<dbReference type="EMBL" id="CP002685">
    <property type="protein sequence ID" value="AEC09273.1"/>
    <property type="molecule type" value="Genomic_DNA"/>
</dbReference>
<dbReference type="EMBL" id="DQ056569">
    <property type="protein sequence ID" value="AAY78719.1"/>
    <property type="molecule type" value="mRNA"/>
</dbReference>
<dbReference type="PIR" id="E84782">
    <property type="entry name" value="E84782"/>
</dbReference>
<dbReference type="SMR" id="Q4PSR7"/>
<dbReference type="BioGRID" id="3577">
    <property type="interactions" value="12"/>
</dbReference>
<dbReference type="FunCoup" id="Q4PSR7">
    <property type="interactions" value="15"/>
</dbReference>
<dbReference type="STRING" id="3702.Q4PSR7"/>
<dbReference type="iPTMnet" id="Q4PSR7"/>
<dbReference type="PaxDb" id="3702-AT2G36610.1"/>
<dbReference type="EnsemblPlants" id="AT2G36610.1">
    <property type="protein sequence ID" value="AT2G36610.1"/>
    <property type="gene ID" value="AT2G36610"/>
</dbReference>
<dbReference type="GeneID" id="818233"/>
<dbReference type="Gramene" id="AT2G36610.1">
    <property type="protein sequence ID" value="AT2G36610.1"/>
    <property type="gene ID" value="AT2G36610"/>
</dbReference>
<dbReference type="KEGG" id="ath:AT2G36610"/>
<dbReference type="Araport" id="AT2G36610"/>
<dbReference type="TAIR" id="AT2G36610">
    <property type="gene designation" value="HB22"/>
</dbReference>
<dbReference type="eggNOG" id="KOG0483">
    <property type="taxonomic scope" value="Eukaryota"/>
</dbReference>
<dbReference type="HOGENOM" id="CLU_1505482_0_0_1"/>
<dbReference type="InParanoid" id="Q4PSR7"/>
<dbReference type="OMA" id="KKQTWEK"/>
<dbReference type="OrthoDB" id="6159439at2759"/>
<dbReference type="PhylomeDB" id="Q4PSR7"/>
<dbReference type="PRO" id="PR:Q4PSR7"/>
<dbReference type="Proteomes" id="UP000006548">
    <property type="component" value="Chromosome 2"/>
</dbReference>
<dbReference type="ExpressionAtlas" id="Q4PSR7">
    <property type="expression patterns" value="baseline and differential"/>
</dbReference>
<dbReference type="GO" id="GO:0005634">
    <property type="term" value="C:nucleus"/>
    <property type="evidence" value="ECO:0007669"/>
    <property type="project" value="UniProtKB-SubCell"/>
</dbReference>
<dbReference type="GO" id="GO:0003700">
    <property type="term" value="F:DNA-binding transcription factor activity"/>
    <property type="evidence" value="ECO:0000250"/>
    <property type="project" value="TAIR"/>
</dbReference>
<dbReference type="GO" id="GO:0000981">
    <property type="term" value="F:DNA-binding transcription factor activity, RNA polymerase II-specific"/>
    <property type="evidence" value="ECO:0007669"/>
    <property type="project" value="InterPro"/>
</dbReference>
<dbReference type="GO" id="GO:0000976">
    <property type="term" value="F:transcription cis-regulatory region binding"/>
    <property type="evidence" value="ECO:0000353"/>
    <property type="project" value="TAIR"/>
</dbReference>
<dbReference type="CDD" id="cd00086">
    <property type="entry name" value="homeodomain"/>
    <property type="match status" value="1"/>
</dbReference>
<dbReference type="Gene3D" id="1.10.10.60">
    <property type="entry name" value="Homeodomain-like"/>
    <property type="match status" value="1"/>
</dbReference>
<dbReference type="InterPro" id="IPR001356">
    <property type="entry name" value="HD"/>
</dbReference>
<dbReference type="InterPro" id="IPR045224">
    <property type="entry name" value="HDZip_class_I_plant"/>
</dbReference>
<dbReference type="InterPro" id="IPR017970">
    <property type="entry name" value="Homeobox_CS"/>
</dbReference>
<dbReference type="InterPro" id="IPR009057">
    <property type="entry name" value="Homeodomain-like_sf"/>
</dbReference>
<dbReference type="InterPro" id="IPR000047">
    <property type="entry name" value="HTH_motif"/>
</dbReference>
<dbReference type="PANTHER" id="PTHR24326">
    <property type="entry name" value="HOMEOBOX-LEUCINE ZIPPER PROTEIN"/>
    <property type="match status" value="1"/>
</dbReference>
<dbReference type="PANTHER" id="PTHR24326:SF531">
    <property type="entry name" value="HOMEOBOX-LEUCINE ZIPPER PROTEIN ATHB-22"/>
    <property type="match status" value="1"/>
</dbReference>
<dbReference type="Pfam" id="PF00046">
    <property type="entry name" value="Homeodomain"/>
    <property type="match status" value="1"/>
</dbReference>
<dbReference type="PRINTS" id="PR00031">
    <property type="entry name" value="HTHREPRESSR"/>
</dbReference>
<dbReference type="SMART" id="SM00389">
    <property type="entry name" value="HOX"/>
    <property type="match status" value="1"/>
</dbReference>
<dbReference type="SUPFAM" id="SSF46689">
    <property type="entry name" value="Homeodomain-like"/>
    <property type="match status" value="1"/>
</dbReference>
<dbReference type="PROSITE" id="PS00027">
    <property type="entry name" value="HOMEOBOX_1"/>
    <property type="match status" value="1"/>
</dbReference>
<dbReference type="PROSITE" id="PS50071">
    <property type="entry name" value="HOMEOBOX_2"/>
    <property type="match status" value="1"/>
</dbReference>
<keyword id="KW-0238">DNA-binding</keyword>
<keyword id="KW-0371">Homeobox</keyword>
<keyword id="KW-0539">Nucleus</keyword>
<keyword id="KW-1185">Reference proteome</keyword>
<keyword id="KW-0804">Transcription</keyword>
<keyword id="KW-0805">Transcription regulation</keyword>
<sequence length="185" mass="21832">MEYWSSSFIDGASSSSFISPFYNFDHFSGNQDNRCLGTMMGAQQDILHVPLAMVESGYGEESNSFNGQEKKKKKMTSEQLKFLERSFQEEIKLNPDRKMKLNPDRKMKLSKELGLQPRQIAVWFQNRKARWKNKQLEHLYESLRQEFDIVSREKELLQEELIQLKSMIREDSSCKKKQTWEKACS</sequence>
<gene>
    <name type="primary">ATHB-22</name>
    <name type="ordered locus">At2g36610</name>
    <name type="ORF">F13K3.1</name>
    <name type="ORF">F1O11.24</name>
</gene>
<organism>
    <name type="scientific">Arabidopsis thaliana</name>
    <name type="common">Mouse-ear cress</name>
    <dbReference type="NCBI Taxonomy" id="3702"/>
    <lineage>
        <taxon>Eukaryota</taxon>
        <taxon>Viridiplantae</taxon>
        <taxon>Streptophyta</taxon>
        <taxon>Embryophyta</taxon>
        <taxon>Tracheophyta</taxon>
        <taxon>Spermatophyta</taxon>
        <taxon>Magnoliopsida</taxon>
        <taxon>eudicotyledons</taxon>
        <taxon>Gunneridae</taxon>
        <taxon>Pentapetalae</taxon>
        <taxon>rosids</taxon>
        <taxon>malvids</taxon>
        <taxon>Brassicales</taxon>
        <taxon>Brassicaceae</taxon>
        <taxon>Camelineae</taxon>
        <taxon>Arabidopsis</taxon>
    </lineage>
</organism>